<gene>
    <name evidence="1" type="primary">glsA1</name>
    <name type="ordered locus">Z0606</name>
    <name type="ordered locus">ECs0538</name>
</gene>
<dbReference type="EC" id="3.5.1.2" evidence="1"/>
<dbReference type="EMBL" id="AE005174">
    <property type="protein sequence ID" value="AAG54834.1"/>
    <property type="molecule type" value="Genomic_DNA"/>
</dbReference>
<dbReference type="EMBL" id="BA000007">
    <property type="protein sequence ID" value="BAB33961.1"/>
    <property type="molecule type" value="Genomic_DNA"/>
</dbReference>
<dbReference type="PIR" id="B90696">
    <property type="entry name" value="B90696"/>
</dbReference>
<dbReference type="PIR" id="F85546">
    <property type="entry name" value="F85546"/>
</dbReference>
<dbReference type="SMR" id="Q8XD23"/>
<dbReference type="STRING" id="155864.Z0606"/>
<dbReference type="KEGG" id="ece:Z0606"/>
<dbReference type="KEGG" id="ecs:ECs_0538"/>
<dbReference type="PATRIC" id="fig|386585.9.peg.645"/>
<dbReference type="eggNOG" id="COG2066">
    <property type="taxonomic scope" value="Bacteria"/>
</dbReference>
<dbReference type="HOGENOM" id="CLU_027932_1_0_6"/>
<dbReference type="OMA" id="NALMQTC"/>
<dbReference type="Proteomes" id="UP000000558">
    <property type="component" value="Chromosome"/>
</dbReference>
<dbReference type="Proteomes" id="UP000002519">
    <property type="component" value="Chromosome"/>
</dbReference>
<dbReference type="GO" id="GO:0004359">
    <property type="term" value="F:glutaminase activity"/>
    <property type="evidence" value="ECO:0007669"/>
    <property type="project" value="UniProtKB-UniRule"/>
</dbReference>
<dbReference type="GO" id="GO:0006537">
    <property type="term" value="P:glutamate biosynthetic process"/>
    <property type="evidence" value="ECO:0007669"/>
    <property type="project" value="TreeGrafter"/>
</dbReference>
<dbReference type="GO" id="GO:0006543">
    <property type="term" value="P:glutamine catabolic process"/>
    <property type="evidence" value="ECO:0007669"/>
    <property type="project" value="TreeGrafter"/>
</dbReference>
<dbReference type="FunFam" id="3.40.710.10:FF:000014">
    <property type="entry name" value="Glutaminase"/>
    <property type="match status" value="1"/>
</dbReference>
<dbReference type="Gene3D" id="3.40.710.10">
    <property type="entry name" value="DD-peptidase/beta-lactamase superfamily"/>
    <property type="match status" value="1"/>
</dbReference>
<dbReference type="HAMAP" id="MF_00313">
    <property type="entry name" value="Glutaminase"/>
    <property type="match status" value="1"/>
</dbReference>
<dbReference type="InterPro" id="IPR012338">
    <property type="entry name" value="Beta-lactam/transpept-like"/>
</dbReference>
<dbReference type="InterPro" id="IPR015868">
    <property type="entry name" value="Glutaminase"/>
</dbReference>
<dbReference type="NCBIfam" id="TIGR03814">
    <property type="entry name" value="Gln_ase"/>
    <property type="match status" value="1"/>
</dbReference>
<dbReference type="NCBIfam" id="NF009020">
    <property type="entry name" value="PRK12356.1"/>
    <property type="match status" value="1"/>
</dbReference>
<dbReference type="PANTHER" id="PTHR12544">
    <property type="entry name" value="GLUTAMINASE"/>
    <property type="match status" value="1"/>
</dbReference>
<dbReference type="PANTHER" id="PTHR12544:SF48">
    <property type="entry name" value="GLUTAMINASE 1"/>
    <property type="match status" value="1"/>
</dbReference>
<dbReference type="Pfam" id="PF04960">
    <property type="entry name" value="Glutaminase"/>
    <property type="match status" value="1"/>
</dbReference>
<dbReference type="SUPFAM" id="SSF56601">
    <property type="entry name" value="beta-lactamase/transpeptidase-like"/>
    <property type="match status" value="1"/>
</dbReference>
<reference key="1">
    <citation type="journal article" date="2001" name="Nature">
        <title>Genome sequence of enterohaemorrhagic Escherichia coli O157:H7.</title>
        <authorList>
            <person name="Perna N.T."/>
            <person name="Plunkett G. III"/>
            <person name="Burland V."/>
            <person name="Mau B."/>
            <person name="Glasner J.D."/>
            <person name="Rose D.J."/>
            <person name="Mayhew G.F."/>
            <person name="Evans P.S."/>
            <person name="Gregor J."/>
            <person name="Kirkpatrick H.A."/>
            <person name="Posfai G."/>
            <person name="Hackett J."/>
            <person name="Klink S."/>
            <person name="Boutin A."/>
            <person name="Shao Y."/>
            <person name="Miller L."/>
            <person name="Grotbeck E.J."/>
            <person name="Davis N.W."/>
            <person name="Lim A."/>
            <person name="Dimalanta E.T."/>
            <person name="Potamousis K."/>
            <person name="Apodaca J."/>
            <person name="Anantharaman T.S."/>
            <person name="Lin J."/>
            <person name="Yen G."/>
            <person name="Schwartz D.C."/>
            <person name="Welch R.A."/>
            <person name="Blattner F.R."/>
        </authorList>
    </citation>
    <scope>NUCLEOTIDE SEQUENCE [LARGE SCALE GENOMIC DNA]</scope>
    <source>
        <strain>O157:H7 / EDL933 / ATCC 700927 / EHEC</strain>
    </source>
</reference>
<reference key="2">
    <citation type="journal article" date="2001" name="DNA Res.">
        <title>Complete genome sequence of enterohemorrhagic Escherichia coli O157:H7 and genomic comparison with a laboratory strain K-12.</title>
        <authorList>
            <person name="Hayashi T."/>
            <person name="Makino K."/>
            <person name="Ohnishi M."/>
            <person name="Kurokawa K."/>
            <person name="Ishii K."/>
            <person name="Yokoyama K."/>
            <person name="Han C.-G."/>
            <person name="Ohtsubo E."/>
            <person name="Nakayama K."/>
            <person name="Murata T."/>
            <person name="Tanaka M."/>
            <person name="Tobe T."/>
            <person name="Iida T."/>
            <person name="Takami H."/>
            <person name="Honda T."/>
            <person name="Sasakawa C."/>
            <person name="Ogasawara N."/>
            <person name="Yasunaga T."/>
            <person name="Kuhara S."/>
            <person name="Shiba T."/>
            <person name="Hattori M."/>
            <person name="Shinagawa H."/>
        </authorList>
    </citation>
    <scope>NUCLEOTIDE SEQUENCE [LARGE SCALE GENOMIC DNA]</scope>
    <source>
        <strain>O157:H7 / Sakai / RIMD 0509952 / EHEC</strain>
    </source>
</reference>
<keyword id="KW-0007">Acetylation</keyword>
<keyword id="KW-0378">Hydrolase</keyword>
<keyword id="KW-1185">Reference proteome</keyword>
<organism>
    <name type="scientific">Escherichia coli O157:H7</name>
    <dbReference type="NCBI Taxonomy" id="83334"/>
    <lineage>
        <taxon>Bacteria</taxon>
        <taxon>Pseudomonadati</taxon>
        <taxon>Pseudomonadota</taxon>
        <taxon>Gammaproteobacteria</taxon>
        <taxon>Enterobacterales</taxon>
        <taxon>Enterobacteriaceae</taxon>
        <taxon>Escherichia</taxon>
    </lineage>
</organism>
<sequence length="310" mass="32844">MLDANKLQQAVDQAYTQFHSLNGGQNADYIPFLANVPGQLAAVAIVTSDGNVYSAGDSDYRFALESISKVCTLALALEDVGPQAVQDKIGADPTGLPFNSVIALELHGGKPLSPLVNAGAIATTSLINAENAEQRWQRILHIQQQLAGELVALSDEVNQSEQTTNFHNRAIAWLLYSAGYLYCDAMEACDVYTRQCSTLINTVELATLGATLAAGGVNPLTHKRVLQADNVPYILAEMMMEGLYGRSGDWAYRVGLPGKSGVGGGILAVVPGVMGIAAFSPPLDEEGNSVRGQKMVASVAKQLGYNVFKG</sequence>
<proteinExistence type="inferred from homology"/>
<feature type="chain" id="PRO_0000110609" description="Glutaminase 1">
    <location>
        <begin position="1"/>
        <end position="310"/>
    </location>
</feature>
<feature type="binding site" evidence="1">
    <location>
        <position position="66"/>
    </location>
    <ligand>
        <name>substrate</name>
    </ligand>
</feature>
<feature type="binding site" evidence="1">
    <location>
        <position position="117"/>
    </location>
    <ligand>
        <name>substrate</name>
    </ligand>
</feature>
<feature type="binding site" evidence="1">
    <location>
        <position position="161"/>
    </location>
    <ligand>
        <name>substrate</name>
    </ligand>
</feature>
<feature type="binding site" evidence="1">
    <location>
        <position position="168"/>
    </location>
    <ligand>
        <name>substrate</name>
    </ligand>
</feature>
<feature type="binding site" evidence="1">
    <location>
        <position position="192"/>
    </location>
    <ligand>
        <name>substrate</name>
    </ligand>
</feature>
<feature type="binding site" evidence="1">
    <location>
        <position position="244"/>
    </location>
    <ligand>
        <name>substrate</name>
    </ligand>
</feature>
<feature type="binding site" evidence="1">
    <location>
        <position position="262"/>
    </location>
    <ligand>
        <name>substrate</name>
    </ligand>
</feature>
<feature type="modified residue" description="N6-acetyllysine" evidence="1">
    <location>
        <position position="294"/>
    </location>
</feature>
<name>GLSA1_ECO57</name>
<protein>
    <recommendedName>
        <fullName evidence="1">Glutaminase 1</fullName>
        <ecNumber evidence="1">3.5.1.2</ecNumber>
    </recommendedName>
</protein>
<evidence type="ECO:0000255" key="1">
    <source>
        <dbReference type="HAMAP-Rule" id="MF_00313"/>
    </source>
</evidence>
<accession>Q8XD23</accession>
<comment type="catalytic activity">
    <reaction evidence="1">
        <text>L-glutamine + H2O = L-glutamate + NH4(+)</text>
        <dbReference type="Rhea" id="RHEA:15889"/>
        <dbReference type="ChEBI" id="CHEBI:15377"/>
        <dbReference type="ChEBI" id="CHEBI:28938"/>
        <dbReference type="ChEBI" id="CHEBI:29985"/>
        <dbReference type="ChEBI" id="CHEBI:58359"/>
        <dbReference type="EC" id="3.5.1.2"/>
    </reaction>
</comment>
<comment type="subunit">
    <text evidence="1">Homotetramer.</text>
</comment>
<comment type="similarity">
    <text evidence="1">Belongs to the glutaminase family.</text>
</comment>